<accession>C0H4D0</accession>
<evidence type="ECO:0000255" key="1"/>
<evidence type="ECO:0000269" key="2">
    <source>
    </source>
</evidence>
<evidence type="ECO:0000303" key="3">
    <source>
    </source>
</evidence>
<evidence type="ECO:0000305" key="4"/>
<evidence type="ECO:0000305" key="5">
    <source>
    </source>
</evidence>
<evidence type="ECO:0000312" key="6">
    <source>
        <dbReference type="EMBL" id="CAX63952.1"/>
    </source>
</evidence>
<evidence type="ECO:0000312" key="7">
    <source>
        <dbReference type="Proteomes" id="UP000001450"/>
    </source>
</evidence>
<name>SUBPM_PLAF7</name>
<reference evidence="7" key="1">
    <citation type="journal article" date="2002" name="Nature">
        <title>Genome sequence of the human malaria parasite Plasmodium falciparum.</title>
        <authorList>
            <person name="Gardner M.J."/>
            <person name="Hall N."/>
            <person name="Fung E."/>
            <person name="White O."/>
            <person name="Berriman M."/>
            <person name="Hyman R.W."/>
            <person name="Carlton J.M."/>
            <person name="Pain A."/>
            <person name="Nelson K.E."/>
            <person name="Bowman S."/>
            <person name="Paulsen I.T."/>
            <person name="James K.D."/>
            <person name="Eisen J.A."/>
            <person name="Rutherford K.M."/>
            <person name="Salzberg S.L."/>
            <person name="Craig A."/>
            <person name="Kyes S."/>
            <person name="Chan M.-S."/>
            <person name="Nene V."/>
            <person name="Shallom S.J."/>
            <person name="Suh B."/>
            <person name="Peterson J."/>
            <person name="Angiuoli S."/>
            <person name="Pertea M."/>
            <person name="Allen J."/>
            <person name="Selengut J."/>
            <person name="Haft D."/>
            <person name="Mather M.W."/>
            <person name="Vaidya A.B."/>
            <person name="Martin D.M.A."/>
            <person name="Fairlamb A.H."/>
            <person name="Fraunholz M.J."/>
            <person name="Roos D.S."/>
            <person name="Ralph S.A."/>
            <person name="McFadden G.I."/>
            <person name="Cummings L.M."/>
            <person name="Subramanian G.M."/>
            <person name="Mungall C."/>
            <person name="Venter J.C."/>
            <person name="Carucci D.J."/>
            <person name="Hoffman S.L."/>
            <person name="Newbold C."/>
            <person name="Davis R.W."/>
            <person name="Fraser C.M."/>
            <person name="Barrell B.G."/>
        </authorList>
    </citation>
    <scope>NUCLEOTIDE SEQUENCE [LARGE SCALE GENOMIC DNA]</scope>
    <source>
        <strain evidence="7">3D7</strain>
    </source>
</reference>
<reference evidence="7" key="2">
    <citation type="journal article" date="2002" name="Nature">
        <title>Sequence of Plasmodium falciparum chromosomes 1, 3-9 and 13.</title>
        <authorList>
            <person name="Hall N."/>
            <person name="Pain A."/>
            <person name="Berriman M."/>
            <person name="Churcher C.M."/>
            <person name="Harris B."/>
            <person name="Harris D."/>
            <person name="Mungall K.L."/>
            <person name="Bowman S."/>
            <person name="Atkin R."/>
            <person name="Baker S."/>
            <person name="Barron A."/>
            <person name="Brooks K."/>
            <person name="Buckee C.O."/>
            <person name="Burrows C."/>
            <person name="Cherevach I."/>
            <person name="Chillingworth C."/>
            <person name="Chillingworth T."/>
            <person name="Christodoulou Z."/>
            <person name="Clark L."/>
            <person name="Clark R."/>
            <person name="Corton C."/>
            <person name="Cronin A."/>
            <person name="Davies R.M."/>
            <person name="Davis P."/>
            <person name="Dear P."/>
            <person name="Dearden F."/>
            <person name="Doggett J."/>
            <person name="Feltwell T."/>
            <person name="Goble A."/>
            <person name="Goodhead I."/>
            <person name="Gwilliam R."/>
            <person name="Hamlin N."/>
            <person name="Hance Z."/>
            <person name="Harper D."/>
            <person name="Hauser H."/>
            <person name="Hornsby T."/>
            <person name="Holroyd S."/>
            <person name="Horrocks P."/>
            <person name="Humphray S."/>
            <person name="Jagels K."/>
            <person name="James K.D."/>
            <person name="Johnson D."/>
            <person name="Kerhornou A."/>
            <person name="Knights A."/>
            <person name="Konfortov B."/>
            <person name="Kyes S."/>
            <person name="Larke N."/>
            <person name="Lawson D."/>
            <person name="Lennard N."/>
            <person name="Line A."/>
            <person name="Maddison M."/>
            <person name="Mclean J."/>
            <person name="Mooney P."/>
            <person name="Moule S."/>
            <person name="Murphy L."/>
            <person name="Oliver K."/>
            <person name="Ormond D."/>
            <person name="Price C."/>
            <person name="Quail M.A."/>
            <person name="Rabbinowitsch E."/>
            <person name="Rajandream M.A."/>
            <person name="Rutter S."/>
            <person name="Rutherford K.M."/>
            <person name="Sanders M."/>
            <person name="Simmonds M."/>
            <person name="Seeger K."/>
            <person name="Sharp S."/>
            <person name="Smith R."/>
            <person name="Squares R."/>
            <person name="Squares S."/>
            <person name="Stevens K."/>
            <person name="Taylor K."/>
            <person name="Tivey A."/>
            <person name="Unwin L."/>
            <person name="Whitehead S."/>
            <person name="Woodward J.R."/>
            <person name="Sulston J.E."/>
            <person name="Craig A."/>
            <person name="Newbold C."/>
            <person name="Barrell B.G."/>
        </authorList>
    </citation>
    <scope>NUCLEOTIDE SEQUENCE [LARGE SCALE GENOMIC DNA]</scope>
    <source>
        <strain evidence="7">3D7</strain>
    </source>
</reference>
<reference evidence="4" key="3">
    <citation type="journal article" date="2020" name="Biochem. J.">
        <title>A malaria parasite subtilisin propeptide-like protein is a potent inhibitor of the egress protease SUB1.</title>
        <authorList>
            <person name="Tarr S.J."/>
            <person name="Withers-Martinez C."/>
            <person name="Flynn H.R."/>
            <person name="Snijders A.P."/>
            <person name="Masino L."/>
            <person name="Koussis K."/>
            <person name="Conway D.J."/>
            <person name="Blackman M.J."/>
        </authorList>
    </citation>
    <scope>FUNCTION</scope>
    <scope>SUBCELLULAR LOCATION</scope>
    <scope>DEVELOPMENTAL STAGE</scope>
    <scope>REGION</scope>
    <scope>IDENTIFICATION BY MASS SPECTROMETRY</scope>
</reference>
<comment type="function">
    <text evidence="2">Acts as a specific inhibitor of subtilisin-like protease SUB1.</text>
</comment>
<comment type="subcellular location">
    <subcellularLocation>
        <location evidence="5">Secreted</location>
    </subcellularLocation>
    <subcellularLocation>
        <location evidence="5">Parasitophorous vacuole lumen</location>
    </subcellularLocation>
    <subcellularLocation>
        <location evidence="5">Cell membrane</location>
        <topology evidence="4">Peripheral membrane protein</topology>
        <orientation evidence="4">Extracellular side</orientation>
    </subcellularLocation>
</comment>
<comment type="developmental stage">
    <text evidence="2">Expressed during the parasite blood stage, specifically in schizonts (at protein level).</text>
</comment>
<gene>
    <name evidence="6" type="ORF">PF3D7_0507400</name>
</gene>
<keyword id="KW-1003">Cell membrane</keyword>
<keyword id="KW-0472">Membrane</keyword>
<keyword id="KW-1185">Reference proteome</keyword>
<keyword id="KW-0964">Secreted</keyword>
<keyword id="KW-0732">Signal</keyword>
<proteinExistence type="evidence at protein level"/>
<protein>
    <recommendedName>
        <fullName evidence="3">Subtilisin propeptide-like protein</fullName>
    </recommendedName>
    <alternativeName>
        <fullName evidence="3">PfSUB1-ProM</fullName>
    </alternativeName>
</protein>
<organism evidence="7">
    <name type="scientific">Plasmodium falciparum (isolate 3D7)</name>
    <dbReference type="NCBI Taxonomy" id="36329"/>
    <lineage>
        <taxon>Eukaryota</taxon>
        <taxon>Sar</taxon>
        <taxon>Alveolata</taxon>
        <taxon>Apicomplexa</taxon>
        <taxon>Aconoidasida</taxon>
        <taxon>Haemosporida</taxon>
        <taxon>Plasmodiidae</taxon>
        <taxon>Plasmodium</taxon>
        <taxon>Plasmodium (Laverania)</taxon>
    </lineage>
</organism>
<sequence>MKFLFAFNFFSLYIYLYEFLCIHLCGSQVTPAGTVLNSNSALISRRINRRKMKNCNNNDLLKVLKMETTYNELPAHNLLMSSKNDINKLFDYINKNEELSKLMNSCGTYVYLKYLGVVIFSIKENVQISHLSEFIQYLLNKNVCIEFNQNVML</sequence>
<feature type="signal peptide" evidence="1">
    <location>
        <begin position="1"/>
        <end position="27"/>
    </location>
</feature>
<feature type="chain" id="PRO_5002898753" description="Subtilisin propeptide-like protein" evidence="1">
    <location>
        <begin position="28"/>
        <end position="153"/>
    </location>
</feature>
<feature type="region of interest" description="Dispensable for parasite growth in host erythrocytes" evidence="2">
    <location>
        <begin position="127"/>
        <end position="153"/>
    </location>
</feature>
<dbReference type="EMBL" id="AL844504">
    <property type="protein sequence ID" value="CAX63952.1"/>
    <property type="molecule type" value="Genomic_DNA"/>
</dbReference>
<dbReference type="RefSeq" id="XP_002808681.1">
    <property type="nucleotide sequence ID" value="XM_002808635.1"/>
</dbReference>
<dbReference type="SMR" id="C0H4D0"/>
<dbReference type="FunCoup" id="C0H4D0">
    <property type="interactions" value="211"/>
</dbReference>
<dbReference type="PaxDb" id="5833-PFE0365c"/>
<dbReference type="EnsemblProtists" id="CAX63952">
    <property type="protein sequence ID" value="CAX63952"/>
    <property type="gene ID" value="PF3D7_0507400"/>
</dbReference>
<dbReference type="GeneID" id="812880"/>
<dbReference type="KEGG" id="pfa:PF3D7_0507400"/>
<dbReference type="VEuPathDB" id="PlasmoDB:PF3D7_0507400"/>
<dbReference type="HOGENOM" id="CLU_144471_0_0_1"/>
<dbReference type="InParanoid" id="C0H4D0"/>
<dbReference type="OMA" id="VCIEFDQ"/>
<dbReference type="OrthoDB" id="383171at2759"/>
<dbReference type="PhylomeDB" id="C0H4D0"/>
<dbReference type="Proteomes" id="UP000001450">
    <property type="component" value="Chromosome 5"/>
</dbReference>
<dbReference type="GO" id="GO:0005576">
    <property type="term" value="C:extracellular region"/>
    <property type="evidence" value="ECO:0007669"/>
    <property type="project" value="UniProtKB-SubCell"/>
</dbReference>
<dbReference type="GO" id="GO:0005886">
    <property type="term" value="C:plasma membrane"/>
    <property type="evidence" value="ECO:0007669"/>
    <property type="project" value="UniProtKB-SubCell"/>
</dbReference>
<dbReference type="GO" id="GO:0004867">
    <property type="term" value="F:serine-type endopeptidase inhibitor activity"/>
    <property type="evidence" value="ECO:0000314"/>
    <property type="project" value="UniProtKB"/>
</dbReference>
<dbReference type="GO" id="GO:0010951">
    <property type="term" value="P:negative regulation of endopeptidase activity"/>
    <property type="evidence" value="ECO:0000314"/>
    <property type="project" value="UniProtKB"/>
</dbReference>